<dbReference type="EMBL" id="AE006470">
    <property type="protein sequence ID" value="AAM73053.1"/>
    <property type="molecule type" value="Genomic_DNA"/>
</dbReference>
<dbReference type="RefSeq" id="NP_662711.1">
    <property type="nucleotide sequence ID" value="NC_002932.3"/>
</dbReference>
<dbReference type="RefSeq" id="WP_010933492.1">
    <property type="nucleotide sequence ID" value="NC_002932.3"/>
</dbReference>
<dbReference type="SMR" id="Q8KBF5"/>
<dbReference type="STRING" id="194439.CT1832"/>
<dbReference type="EnsemblBacteria" id="AAM73053">
    <property type="protein sequence ID" value="AAM73053"/>
    <property type="gene ID" value="CT1832"/>
</dbReference>
<dbReference type="KEGG" id="cte:CT1832"/>
<dbReference type="eggNOG" id="COG1872">
    <property type="taxonomic scope" value="Bacteria"/>
</dbReference>
<dbReference type="HOGENOM" id="CLU_130694_6_0_10"/>
<dbReference type="OrthoDB" id="9800587at2"/>
<dbReference type="Proteomes" id="UP000001007">
    <property type="component" value="Chromosome"/>
</dbReference>
<dbReference type="GO" id="GO:0005737">
    <property type="term" value="C:cytoplasm"/>
    <property type="evidence" value="ECO:0007669"/>
    <property type="project" value="TreeGrafter"/>
</dbReference>
<dbReference type="Gene3D" id="3.30.1200.10">
    <property type="entry name" value="YggU-like"/>
    <property type="match status" value="1"/>
</dbReference>
<dbReference type="HAMAP" id="MF_00634">
    <property type="entry name" value="UPF0235"/>
    <property type="match status" value="1"/>
</dbReference>
<dbReference type="InterPro" id="IPR003746">
    <property type="entry name" value="DUF167"/>
</dbReference>
<dbReference type="InterPro" id="IPR036591">
    <property type="entry name" value="YggU-like_sf"/>
</dbReference>
<dbReference type="NCBIfam" id="TIGR00251">
    <property type="entry name" value="DUF167 family protein"/>
    <property type="match status" value="1"/>
</dbReference>
<dbReference type="PANTHER" id="PTHR13420">
    <property type="entry name" value="UPF0235 PROTEIN C15ORF40"/>
    <property type="match status" value="1"/>
</dbReference>
<dbReference type="PANTHER" id="PTHR13420:SF7">
    <property type="entry name" value="UPF0235 PROTEIN C15ORF40"/>
    <property type="match status" value="1"/>
</dbReference>
<dbReference type="Pfam" id="PF02594">
    <property type="entry name" value="DUF167"/>
    <property type="match status" value="1"/>
</dbReference>
<dbReference type="SMART" id="SM01152">
    <property type="entry name" value="DUF167"/>
    <property type="match status" value="1"/>
</dbReference>
<dbReference type="SUPFAM" id="SSF69786">
    <property type="entry name" value="YggU-like"/>
    <property type="match status" value="1"/>
</dbReference>
<organism>
    <name type="scientific">Chlorobaculum tepidum (strain ATCC 49652 / DSM 12025 / NBRC 103806 / TLS)</name>
    <name type="common">Chlorobium tepidum</name>
    <dbReference type="NCBI Taxonomy" id="194439"/>
    <lineage>
        <taxon>Bacteria</taxon>
        <taxon>Pseudomonadati</taxon>
        <taxon>Chlorobiota</taxon>
        <taxon>Chlorobiia</taxon>
        <taxon>Chlorobiales</taxon>
        <taxon>Chlorobiaceae</taxon>
        <taxon>Chlorobaculum</taxon>
    </lineage>
</organism>
<protein>
    <recommendedName>
        <fullName evidence="1">UPF0235 protein CT1832</fullName>
    </recommendedName>
</protein>
<accession>Q8KBF5</accession>
<evidence type="ECO:0000255" key="1">
    <source>
        <dbReference type="HAMAP-Rule" id="MF_00634"/>
    </source>
</evidence>
<keyword id="KW-1185">Reference proteome</keyword>
<reference key="1">
    <citation type="journal article" date="2002" name="Proc. Natl. Acad. Sci. U.S.A.">
        <title>The complete genome sequence of Chlorobium tepidum TLS, a photosynthetic, anaerobic, green-sulfur bacterium.</title>
        <authorList>
            <person name="Eisen J.A."/>
            <person name="Nelson K.E."/>
            <person name="Paulsen I.T."/>
            <person name="Heidelberg J.F."/>
            <person name="Wu M."/>
            <person name="Dodson R.J."/>
            <person name="DeBoy R.T."/>
            <person name="Gwinn M.L."/>
            <person name="Nelson W.C."/>
            <person name="Haft D.H."/>
            <person name="Hickey E.K."/>
            <person name="Peterson J.D."/>
            <person name="Durkin A.S."/>
            <person name="Kolonay J.F."/>
            <person name="Yang F."/>
            <person name="Holt I.E."/>
            <person name="Umayam L.A."/>
            <person name="Mason T.M."/>
            <person name="Brenner M."/>
            <person name="Shea T.P."/>
            <person name="Parksey D.S."/>
            <person name="Nierman W.C."/>
            <person name="Feldblyum T.V."/>
            <person name="Hansen C.L."/>
            <person name="Craven M.B."/>
            <person name="Radune D."/>
            <person name="Vamathevan J.J."/>
            <person name="Khouri H.M."/>
            <person name="White O."/>
            <person name="Gruber T.M."/>
            <person name="Ketchum K.A."/>
            <person name="Venter J.C."/>
            <person name="Tettelin H."/>
            <person name="Bryant D.A."/>
            <person name="Fraser C.M."/>
        </authorList>
    </citation>
    <scope>NUCLEOTIDE SEQUENCE [LARGE SCALE GENOMIC DNA]</scope>
    <source>
        <strain>ATCC 49652 / DSM 12025 / NBRC 103806 / TLS</strain>
    </source>
</reference>
<comment type="similarity">
    <text evidence="1">Belongs to the UPF0235 family.</text>
</comment>
<sequence length="105" mass="10747">MSPISQKGEAVCLSVRVQPRSSKSGVAGMYGEQLKICLKSAPVDNAANKECCELLAKALGVPRSSVSVMKGASSRSKVLKVEGVTPAAVREALVGMLGDEAEAGA</sequence>
<name>Y1832_CHLTE</name>
<feature type="chain" id="PRO_0000139439" description="UPF0235 protein CT1832">
    <location>
        <begin position="1"/>
        <end position="105"/>
    </location>
</feature>
<proteinExistence type="inferred from homology"/>
<gene>
    <name type="ordered locus">CT1832</name>
</gene>